<feature type="chain" id="PRO_1000076432" description="N-(5'-phosphoribosyl)anthranilate isomerase">
    <location>
        <begin position="1"/>
        <end position="218"/>
    </location>
</feature>
<comment type="catalytic activity">
    <reaction evidence="1">
        <text>N-(5-phospho-beta-D-ribosyl)anthranilate = 1-(2-carboxyphenylamino)-1-deoxy-D-ribulose 5-phosphate</text>
        <dbReference type="Rhea" id="RHEA:21540"/>
        <dbReference type="ChEBI" id="CHEBI:18277"/>
        <dbReference type="ChEBI" id="CHEBI:58613"/>
        <dbReference type="EC" id="5.3.1.24"/>
    </reaction>
</comment>
<comment type="pathway">
    <text evidence="1">Amino-acid biosynthesis; L-tryptophan biosynthesis; L-tryptophan from chorismate: step 3/5.</text>
</comment>
<comment type="similarity">
    <text evidence="1">Belongs to the TrpF family.</text>
</comment>
<organism>
    <name type="scientific">Bordetella pertussis (strain Tohama I / ATCC BAA-589 / NCTC 13251)</name>
    <dbReference type="NCBI Taxonomy" id="257313"/>
    <lineage>
        <taxon>Bacteria</taxon>
        <taxon>Pseudomonadati</taxon>
        <taxon>Pseudomonadota</taxon>
        <taxon>Betaproteobacteria</taxon>
        <taxon>Burkholderiales</taxon>
        <taxon>Alcaligenaceae</taxon>
        <taxon>Bordetella</taxon>
    </lineage>
</organism>
<sequence length="218" mass="22896">MRTRVKICGLTREQDIASAVQAGADAIGFVFYPASKRHVDPARAAQLRREVPAFVDVVALFVNPRPDEVQAVLDHVAPDLLQFHGDETPQDCGRYGRRYLRAFRAGAPGLDSAAGLAAACRQYADAAGWLFDSYSAGYGGSGQGFDHGLLAGVQADPASCAIVLAGGLHPGNVADAVRAVRPWAVDVSSGVEDAPGIKSAGKIRQLMAAIKSVDQVAR</sequence>
<evidence type="ECO:0000255" key="1">
    <source>
        <dbReference type="HAMAP-Rule" id="MF_00135"/>
    </source>
</evidence>
<reference key="1">
    <citation type="journal article" date="2003" name="Nat. Genet.">
        <title>Comparative analysis of the genome sequences of Bordetella pertussis, Bordetella parapertussis and Bordetella bronchiseptica.</title>
        <authorList>
            <person name="Parkhill J."/>
            <person name="Sebaihia M."/>
            <person name="Preston A."/>
            <person name="Murphy L.D."/>
            <person name="Thomson N.R."/>
            <person name="Harris D.E."/>
            <person name="Holden M.T.G."/>
            <person name="Churcher C.M."/>
            <person name="Bentley S.D."/>
            <person name="Mungall K.L."/>
            <person name="Cerdeno-Tarraga A.-M."/>
            <person name="Temple L."/>
            <person name="James K.D."/>
            <person name="Harris B."/>
            <person name="Quail M.A."/>
            <person name="Achtman M."/>
            <person name="Atkin R."/>
            <person name="Baker S."/>
            <person name="Basham D."/>
            <person name="Bason N."/>
            <person name="Cherevach I."/>
            <person name="Chillingworth T."/>
            <person name="Collins M."/>
            <person name="Cronin A."/>
            <person name="Davis P."/>
            <person name="Doggett J."/>
            <person name="Feltwell T."/>
            <person name="Goble A."/>
            <person name="Hamlin N."/>
            <person name="Hauser H."/>
            <person name="Holroyd S."/>
            <person name="Jagels K."/>
            <person name="Leather S."/>
            <person name="Moule S."/>
            <person name="Norberczak H."/>
            <person name="O'Neil S."/>
            <person name="Ormond D."/>
            <person name="Price C."/>
            <person name="Rabbinowitsch E."/>
            <person name="Rutter S."/>
            <person name="Sanders M."/>
            <person name="Saunders D."/>
            <person name="Seeger K."/>
            <person name="Sharp S."/>
            <person name="Simmonds M."/>
            <person name="Skelton J."/>
            <person name="Squares R."/>
            <person name="Squares S."/>
            <person name="Stevens K."/>
            <person name="Unwin L."/>
            <person name="Whitehead S."/>
            <person name="Barrell B.G."/>
            <person name="Maskell D.J."/>
        </authorList>
    </citation>
    <scope>NUCLEOTIDE SEQUENCE [LARGE SCALE GENOMIC DNA]</scope>
    <source>
        <strain>Tohama I / ATCC BAA-589 / NCTC 13251</strain>
    </source>
</reference>
<keyword id="KW-0028">Amino-acid biosynthesis</keyword>
<keyword id="KW-0057">Aromatic amino acid biosynthesis</keyword>
<keyword id="KW-0413">Isomerase</keyword>
<keyword id="KW-1185">Reference proteome</keyword>
<keyword id="KW-0822">Tryptophan biosynthesis</keyword>
<protein>
    <recommendedName>
        <fullName evidence="1">N-(5'-phosphoribosyl)anthranilate isomerase</fullName>
        <shortName evidence="1">PRAI</shortName>
        <ecNumber evidence="1">5.3.1.24</ecNumber>
    </recommendedName>
</protein>
<dbReference type="EC" id="5.3.1.24" evidence="1"/>
<dbReference type="EMBL" id="BX640415">
    <property type="protein sequence ID" value="CAE41779.1"/>
    <property type="molecule type" value="Genomic_DNA"/>
</dbReference>
<dbReference type="RefSeq" id="NP_880227.1">
    <property type="nucleotide sequence ID" value="NC_002929.2"/>
</dbReference>
<dbReference type="RefSeq" id="WP_010930388.1">
    <property type="nucleotide sequence ID" value="NZ_CP039022.1"/>
</dbReference>
<dbReference type="SMR" id="Q7VY68"/>
<dbReference type="STRING" id="257313.BP1490"/>
<dbReference type="PaxDb" id="257313-BP1490"/>
<dbReference type="KEGG" id="bpe:BP1490"/>
<dbReference type="PATRIC" id="fig|257313.5.peg.1598"/>
<dbReference type="eggNOG" id="COG0135">
    <property type="taxonomic scope" value="Bacteria"/>
</dbReference>
<dbReference type="HOGENOM" id="CLU_076364_2_0_4"/>
<dbReference type="UniPathway" id="UPA00035">
    <property type="reaction ID" value="UER00042"/>
</dbReference>
<dbReference type="Proteomes" id="UP000002676">
    <property type="component" value="Chromosome"/>
</dbReference>
<dbReference type="GO" id="GO:0004640">
    <property type="term" value="F:phosphoribosylanthranilate isomerase activity"/>
    <property type="evidence" value="ECO:0007669"/>
    <property type="project" value="UniProtKB-UniRule"/>
</dbReference>
<dbReference type="GO" id="GO:0000162">
    <property type="term" value="P:L-tryptophan biosynthetic process"/>
    <property type="evidence" value="ECO:0007669"/>
    <property type="project" value="UniProtKB-UniRule"/>
</dbReference>
<dbReference type="CDD" id="cd00405">
    <property type="entry name" value="PRAI"/>
    <property type="match status" value="1"/>
</dbReference>
<dbReference type="Gene3D" id="3.20.20.70">
    <property type="entry name" value="Aldolase class I"/>
    <property type="match status" value="1"/>
</dbReference>
<dbReference type="HAMAP" id="MF_00135">
    <property type="entry name" value="PRAI"/>
    <property type="match status" value="1"/>
</dbReference>
<dbReference type="InterPro" id="IPR013785">
    <property type="entry name" value="Aldolase_TIM"/>
</dbReference>
<dbReference type="InterPro" id="IPR001240">
    <property type="entry name" value="PRAI_dom"/>
</dbReference>
<dbReference type="InterPro" id="IPR011060">
    <property type="entry name" value="RibuloseP-bd_barrel"/>
</dbReference>
<dbReference type="InterPro" id="IPR044643">
    <property type="entry name" value="TrpF_fam"/>
</dbReference>
<dbReference type="NCBIfam" id="NF002298">
    <property type="entry name" value="PRK01222.1-4"/>
    <property type="match status" value="1"/>
</dbReference>
<dbReference type="NCBIfam" id="NF002299">
    <property type="entry name" value="PRK01222.1-6"/>
    <property type="match status" value="1"/>
</dbReference>
<dbReference type="PANTHER" id="PTHR42894">
    <property type="entry name" value="N-(5'-PHOSPHORIBOSYL)ANTHRANILATE ISOMERASE"/>
    <property type="match status" value="1"/>
</dbReference>
<dbReference type="PANTHER" id="PTHR42894:SF1">
    <property type="entry name" value="N-(5'-PHOSPHORIBOSYL)ANTHRANILATE ISOMERASE"/>
    <property type="match status" value="1"/>
</dbReference>
<dbReference type="Pfam" id="PF00697">
    <property type="entry name" value="PRAI"/>
    <property type="match status" value="1"/>
</dbReference>
<dbReference type="SUPFAM" id="SSF51366">
    <property type="entry name" value="Ribulose-phoshate binding barrel"/>
    <property type="match status" value="1"/>
</dbReference>
<proteinExistence type="inferred from homology"/>
<name>TRPF_BORPE</name>
<gene>
    <name evidence="1" type="primary">trpF</name>
    <name type="ordered locus">BP1490</name>
</gene>
<accession>Q7VY68</accession>